<name>MDPE_EMENI</name>
<comment type="function">
    <text evidence="3 4">Transcription factor that regulates the expression of the gene cluster that mediates the biosynthesis of monodictyphenone, a prenyl xanthone derivative (PubMed:20139316, PubMed:21351751).</text>
</comment>
<comment type="subcellular location">
    <subcellularLocation>
        <location evidence="1">Nucleus</location>
    </subcellularLocation>
</comment>
<comment type="disruption phenotype">
    <text evidence="3 4">Impairs the production of monodictyphenone and of any of the intermediates of the pathway (PubMed:20139316, PubMed:21351751).</text>
</comment>
<sequence length="435" mass="47480">MTSSEGPGIPAIKTPPVKLRGSCHACALSKLKCSQDKPTCSRCVKRGTACQYLASKRAGRKQGSKTGSFKSFYNMKTDYSTSINKDDDRRELMEVSTELMQYALQQDRSLEVYRRNQYHQRTPSYPESIPSLLSSTGPGTSATSPLTLGPPDYDGYLASPISLSLLDVPDMDYFPGADMSANVMDGFPDPPSFFPSGEPIPTLQENILKTSFADSPVPANSPSVPPTPDVTSVGTPRQCFCFPRALTLLRELFPNPSLSCVTPSSESGSASPPTVQQVITKNEQTLRDITEIIECSCSEDGYTITIITLAAFKVLAWYSAVAHISPISEDSQALEEIDRTPAVVRGYNIDGEDQGRMAAQLVLSELHRVQRLVGNLYQRLKDQVSGGKPARLSTTGVNDSNHYSLPFHLLERLAVDLGAQLRSLSSEIVDRLRRG</sequence>
<proteinExistence type="inferred from homology"/>
<evidence type="ECO:0000255" key="1">
    <source>
        <dbReference type="PROSITE-ProRule" id="PRU00227"/>
    </source>
</evidence>
<evidence type="ECO:0000256" key="2">
    <source>
        <dbReference type="SAM" id="MobiDB-lite"/>
    </source>
</evidence>
<evidence type="ECO:0000269" key="3">
    <source>
    </source>
</evidence>
<evidence type="ECO:0000269" key="4">
    <source>
    </source>
</evidence>
<evidence type="ECO:0000303" key="5">
    <source>
    </source>
</evidence>
<gene>
    <name evidence="5" type="primary">mdpE</name>
    <name type="ORF">AN0148</name>
</gene>
<feature type="chain" id="PRO_0000437058" description="Monodictyphenone cluster transcription factor">
    <location>
        <begin position="1"/>
        <end position="435"/>
    </location>
</feature>
<feature type="DNA-binding region" description="Zn(2)-C6 fungal-type" evidence="1">
    <location>
        <begin position="23"/>
        <end position="50"/>
    </location>
</feature>
<feature type="region of interest" description="Disordered" evidence="2">
    <location>
        <begin position="117"/>
        <end position="147"/>
    </location>
</feature>
<feature type="compositionally biased region" description="Low complexity" evidence="2">
    <location>
        <begin position="130"/>
        <end position="147"/>
    </location>
</feature>
<dbReference type="EMBL" id="BN001308">
    <property type="protein sequence ID" value="CBF90101.1"/>
    <property type="molecule type" value="Genomic_DNA"/>
</dbReference>
<dbReference type="EMBL" id="AACD01000005">
    <property type="protein sequence ID" value="EAA66021.1"/>
    <property type="molecule type" value="Genomic_DNA"/>
</dbReference>
<dbReference type="RefSeq" id="XP_657752.1">
    <property type="nucleotide sequence ID" value="XM_652660.1"/>
</dbReference>
<dbReference type="SMR" id="Q5BH32"/>
<dbReference type="STRING" id="227321.Q5BH32"/>
<dbReference type="EnsemblFungi" id="CBF90101">
    <property type="protein sequence ID" value="CBF90101"/>
    <property type="gene ID" value="ANIA_00148"/>
</dbReference>
<dbReference type="KEGG" id="ani:ANIA_00148"/>
<dbReference type="VEuPathDB" id="FungiDB:AN0148"/>
<dbReference type="eggNOG" id="ENOG502SUW5">
    <property type="taxonomic scope" value="Eukaryota"/>
</dbReference>
<dbReference type="HOGENOM" id="CLU_031656_1_0_1"/>
<dbReference type="InParanoid" id="Q5BH32"/>
<dbReference type="OMA" id="VIRESCN"/>
<dbReference type="OrthoDB" id="2943660at2759"/>
<dbReference type="Proteomes" id="UP000000560">
    <property type="component" value="Chromosome VIII"/>
</dbReference>
<dbReference type="GO" id="GO:0005634">
    <property type="term" value="C:nucleus"/>
    <property type="evidence" value="ECO:0007669"/>
    <property type="project" value="UniProtKB-SubCell"/>
</dbReference>
<dbReference type="GO" id="GO:0003677">
    <property type="term" value="F:DNA binding"/>
    <property type="evidence" value="ECO:0007669"/>
    <property type="project" value="UniProtKB-KW"/>
</dbReference>
<dbReference type="GO" id="GO:0000981">
    <property type="term" value="F:DNA-binding transcription factor activity, RNA polymerase II-specific"/>
    <property type="evidence" value="ECO:0007669"/>
    <property type="project" value="InterPro"/>
</dbReference>
<dbReference type="GO" id="GO:0008270">
    <property type="term" value="F:zinc ion binding"/>
    <property type="evidence" value="ECO:0007669"/>
    <property type="project" value="InterPro"/>
</dbReference>
<dbReference type="GO" id="GO:0045122">
    <property type="term" value="P:aflatoxin biosynthetic process"/>
    <property type="evidence" value="ECO:0007669"/>
    <property type="project" value="InterPro"/>
</dbReference>
<dbReference type="GO" id="GO:1900815">
    <property type="term" value="P:monodictyphenone biosynthetic process"/>
    <property type="evidence" value="ECO:0000315"/>
    <property type="project" value="AspGD"/>
</dbReference>
<dbReference type="GO" id="GO:0043455">
    <property type="term" value="P:regulation of secondary metabolic process"/>
    <property type="evidence" value="ECO:0000250"/>
    <property type="project" value="AspGD"/>
</dbReference>
<dbReference type="CDD" id="cd00067">
    <property type="entry name" value="GAL4"/>
    <property type="match status" value="1"/>
</dbReference>
<dbReference type="Gene3D" id="4.10.240.10">
    <property type="entry name" value="Zn(2)-C6 fungal-type DNA-binding domain"/>
    <property type="match status" value="1"/>
</dbReference>
<dbReference type="InterPro" id="IPR013700">
    <property type="entry name" value="AflR"/>
</dbReference>
<dbReference type="InterPro" id="IPR050675">
    <property type="entry name" value="OAF3"/>
</dbReference>
<dbReference type="InterPro" id="IPR036864">
    <property type="entry name" value="Zn2-C6_fun-type_DNA-bd_sf"/>
</dbReference>
<dbReference type="InterPro" id="IPR001138">
    <property type="entry name" value="Zn2Cys6_DnaBD"/>
</dbReference>
<dbReference type="PANTHER" id="PTHR31069:SF31">
    <property type="entry name" value="MONODICTYPHENONE CLUSTER TRANSCRIPTION FACTOR-RELATED"/>
    <property type="match status" value="1"/>
</dbReference>
<dbReference type="PANTHER" id="PTHR31069">
    <property type="entry name" value="OLEATE-ACTIVATED TRANSCRIPTION FACTOR 1-RELATED"/>
    <property type="match status" value="1"/>
</dbReference>
<dbReference type="Pfam" id="PF08493">
    <property type="entry name" value="AflR"/>
    <property type="match status" value="1"/>
</dbReference>
<dbReference type="Pfam" id="PF00172">
    <property type="entry name" value="Zn_clus"/>
    <property type="match status" value="1"/>
</dbReference>
<dbReference type="PRINTS" id="PR00755">
    <property type="entry name" value="AFLATOXINBRP"/>
</dbReference>
<dbReference type="SMART" id="SM00066">
    <property type="entry name" value="GAL4"/>
    <property type="match status" value="1"/>
</dbReference>
<dbReference type="SUPFAM" id="SSF57701">
    <property type="entry name" value="Zn2/Cys6 DNA-binding domain"/>
    <property type="match status" value="1"/>
</dbReference>
<dbReference type="PROSITE" id="PS00463">
    <property type="entry name" value="ZN2_CY6_FUNGAL_1"/>
    <property type="match status" value="1"/>
</dbReference>
<dbReference type="PROSITE" id="PS50048">
    <property type="entry name" value="ZN2_CY6_FUNGAL_2"/>
    <property type="match status" value="1"/>
</dbReference>
<organism>
    <name type="scientific">Emericella nidulans (strain FGSC A4 / ATCC 38163 / CBS 112.46 / NRRL 194 / M139)</name>
    <name type="common">Aspergillus nidulans</name>
    <dbReference type="NCBI Taxonomy" id="227321"/>
    <lineage>
        <taxon>Eukaryota</taxon>
        <taxon>Fungi</taxon>
        <taxon>Dikarya</taxon>
        <taxon>Ascomycota</taxon>
        <taxon>Pezizomycotina</taxon>
        <taxon>Eurotiomycetes</taxon>
        <taxon>Eurotiomycetidae</taxon>
        <taxon>Eurotiales</taxon>
        <taxon>Aspergillaceae</taxon>
        <taxon>Aspergillus</taxon>
        <taxon>Aspergillus subgen. Nidulantes</taxon>
    </lineage>
</organism>
<accession>Q5BH32</accession>
<accession>C8VQ68</accession>
<protein>
    <recommendedName>
        <fullName evidence="5">Monodictyphenone cluster transcription factor</fullName>
    </recommendedName>
    <alternativeName>
        <fullName evidence="5">Monodictyphenone synthesis protein E</fullName>
    </alternativeName>
</protein>
<keyword id="KW-0238">DNA-binding</keyword>
<keyword id="KW-0479">Metal-binding</keyword>
<keyword id="KW-0539">Nucleus</keyword>
<keyword id="KW-1185">Reference proteome</keyword>
<keyword id="KW-0804">Transcription</keyword>
<keyword id="KW-0805">Transcription regulation</keyword>
<keyword id="KW-0862">Zinc</keyword>
<reference key="1">
    <citation type="journal article" date="2005" name="Nature">
        <title>Sequencing of Aspergillus nidulans and comparative analysis with A. fumigatus and A. oryzae.</title>
        <authorList>
            <person name="Galagan J.E."/>
            <person name="Calvo S.E."/>
            <person name="Cuomo C."/>
            <person name="Ma L.-J."/>
            <person name="Wortman J.R."/>
            <person name="Batzoglou S."/>
            <person name="Lee S.-I."/>
            <person name="Bastuerkmen M."/>
            <person name="Spevak C.C."/>
            <person name="Clutterbuck J."/>
            <person name="Kapitonov V."/>
            <person name="Jurka J."/>
            <person name="Scazzocchio C."/>
            <person name="Farman M.L."/>
            <person name="Butler J."/>
            <person name="Purcell S."/>
            <person name="Harris S."/>
            <person name="Braus G.H."/>
            <person name="Draht O."/>
            <person name="Busch S."/>
            <person name="D'Enfert C."/>
            <person name="Bouchier C."/>
            <person name="Goldman G.H."/>
            <person name="Bell-Pedersen D."/>
            <person name="Griffiths-Jones S."/>
            <person name="Doonan J.H."/>
            <person name="Yu J."/>
            <person name="Vienken K."/>
            <person name="Pain A."/>
            <person name="Freitag M."/>
            <person name="Selker E.U."/>
            <person name="Archer D.B."/>
            <person name="Penalva M.A."/>
            <person name="Oakley B.R."/>
            <person name="Momany M."/>
            <person name="Tanaka T."/>
            <person name="Kumagai T."/>
            <person name="Asai K."/>
            <person name="Machida M."/>
            <person name="Nierman W.C."/>
            <person name="Denning D.W."/>
            <person name="Caddick M.X."/>
            <person name="Hynes M."/>
            <person name="Paoletti M."/>
            <person name="Fischer R."/>
            <person name="Miller B.L."/>
            <person name="Dyer P.S."/>
            <person name="Sachs M.S."/>
            <person name="Osmani S.A."/>
            <person name="Birren B.W."/>
        </authorList>
    </citation>
    <scope>NUCLEOTIDE SEQUENCE [LARGE SCALE GENOMIC DNA]</scope>
    <source>
        <strain>FGSC A4 / ATCC 38163 / CBS 112.46 / NRRL 194 / M139</strain>
    </source>
</reference>
<reference key="2">
    <citation type="journal article" date="2009" name="Fungal Genet. Biol.">
        <title>The 2008 update of the Aspergillus nidulans genome annotation: a community effort.</title>
        <authorList>
            <person name="Wortman J.R."/>
            <person name="Gilsenan J.M."/>
            <person name="Joardar V."/>
            <person name="Deegan J."/>
            <person name="Clutterbuck J."/>
            <person name="Andersen M.R."/>
            <person name="Archer D."/>
            <person name="Bencina M."/>
            <person name="Braus G."/>
            <person name="Coutinho P."/>
            <person name="von Dohren H."/>
            <person name="Doonan J."/>
            <person name="Driessen A.J."/>
            <person name="Durek P."/>
            <person name="Espeso E."/>
            <person name="Fekete E."/>
            <person name="Flipphi M."/>
            <person name="Estrada C.G."/>
            <person name="Geysens S."/>
            <person name="Goldman G."/>
            <person name="de Groot P.W."/>
            <person name="Hansen K."/>
            <person name="Harris S.D."/>
            <person name="Heinekamp T."/>
            <person name="Helmstaedt K."/>
            <person name="Henrissat B."/>
            <person name="Hofmann G."/>
            <person name="Homan T."/>
            <person name="Horio T."/>
            <person name="Horiuchi H."/>
            <person name="James S."/>
            <person name="Jones M."/>
            <person name="Karaffa L."/>
            <person name="Karanyi Z."/>
            <person name="Kato M."/>
            <person name="Keller N."/>
            <person name="Kelly D.E."/>
            <person name="Kiel J.A."/>
            <person name="Kim J.M."/>
            <person name="van der Klei I.J."/>
            <person name="Klis F.M."/>
            <person name="Kovalchuk A."/>
            <person name="Krasevec N."/>
            <person name="Kubicek C.P."/>
            <person name="Liu B."/>
            <person name="Maccabe A."/>
            <person name="Meyer V."/>
            <person name="Mirabito P."/>
            <person name="Miskei M."/>
            <person name="Mos M."/>
            <person name="Mullins J."/>
            <person name="Nelson D.R."/>
            <person name="Nielsen J."/>
            <person name="Oakley B.R."/>
            <person name="Osmani S.A."/>
            <person name="Pakula T."/>
            <person name="Paszewski A."/>
            <person name="Paulsen I."/>
            <person name="Pilsyk S."/>
            <person name="Pocsi I."/>
            <person name="Punt P.J."/>
            <person name="Ram A.F."/>
            <person name="Ren Q."/>
            <person name="Robellet X."/>
            <person name="Robson G."/>
            <person name="Seiboth B."/>
            <person name="van Solingen P."/>
            <person name="Specht T."/>
            <person name="Sun J."/>
            <person name="Taheri-Talesh N."/>
            <person name="Takeshita N."/>
            <person name="Ussery D."/>
            <person name="vanKuyk P.A."/>
            <person name="Visser H."/>
            <person name="van de Vondervoort P.J."/>
            <person name="de Vries R.P."/>
            <person name="Walton J."/>
            <person name="Xiang X."/>
            <person name="Xiong Y."/>
            <person name="Zeng A.P."/>
            <person name="Brandt B.W."/>
            <person name="Cornell M.J."/>
            <person name="van den Hondel C.A."/>
            <person name="Visser J."/>
            <person name="Oliver S.G."/>
            <person name="Turner G."/>
        </authorList>
    </citation>
    <scope>GENOME REANNOTATION</scope>
    <source>
        <strain>FGSC A4 / ATCC 38163 / CBS 112.46 / NRRL 194 / M139</strain>
    </source>
</reference>
<reference key="3">
    <citation type="journal article" date="2010" name="Appl. Environ. Microbiol.">
        <title>Characterization of the Aspergillus nidulans monodictyphenone gene cluster.</title>
        <authorList>
            <person name="Chiang Y.M."/>
            <person name="Szewczyk E."/>
            <person name="Davidson A.D."/>
            <person name="Entwistle R."/>
            <person name="Keller N.P."/>
            <person name="Wang C.C."/>
            <person name="Oakley B.R."/>
        </authorList>
    </citation>
    <scope>FUNCTION</scope>
    <scope>DISRUPTION PHENOTYPE</scope>
</reference>
<reference key="4">
    <citation type="journal article" date="2011" name="J. Am. Chem. Soc.">
        <title>Genome-based deletion analysis reveals the prenyl xanthone biosynthesis pathway in Aspergillus nidulans.</title>
        <authorList>
            <person name="Sanchez J.F."/>
            <person name="Entwistle R."/>
            <person name="Hung J.H."/>
            <person name="Yaegashi J."/>
            <person name="Jain S."/>
            <person name="Chiang Y.M."/>
            <person name="Wang C.C."/>
            <person name="Oakley B.R."/>
        </authorList>
    </citation>
    <scope>FUNCTION</scope>
    <scope>DISRUPTION PHENOTYPE</scope>
</reference>